<accession>Q3BPI3</accession>
<dbReference type="EMBL" id="AM039952">
    <property type="protein sequence ID" value="CAJ25330.1"/>
    <property type="molecule type" value="Genomic_DNA"/>
</dbReference>
<dbReference type="RefSeq" id="WP_003483384.1">
    <property type="nucleotide sequence ID" value="NZ_CP017190.1"/>
</dbReference>
<dbReference type="SMR" id="Q3BPI3"/>
<dbReference type="STRING" id="456327.BJD11_04715"/>
<dbReference type="KEGG" id="xcv:XCV3599"/>
<dbReference type="eggNOG" id="COG1301">
    <property type="taxonomic scope" value="Bacteria"/>
</dbReference>
<dbReference type="HOGENOM" id="CLU_019375_7_0_6"/>
<dbReference type="Proteomes" id="UP000007069">
    <property type="component" value="Chromosome"/>
</dbReference>
<dbReference type="GO" id="GO:0005886">
    <property type="term" value="C:plasma membrane"/>
    <property type="evidence" value="ECO:0007669"/>
    <property type="project" value="UniProtKB-SubCell"/>
</dbReference>
<dbReference type="GO" id="GO:0015138">
    <property type="term" value="F:fumarate transmembrane transporter activity"/>
    <property type="evidence" value="ECO:0007669"/>
    <property type="project" value="TreeGrafter"/>
</dbReference>
<dbReference type="GO" id="GO:0015366">
    <property type="term" value="F:malate:proton symporter activity"/>
    <property type="evidence" value="ECO:0007669"/>
    <property type="project" value="TreeGrafter"/>
</dbReference>
<dbReference type="GO" id="GO:0015141">
    <property type="term" value="F:succinate transmembrane transporter activity"/>
    <property type="evidence" value="ECO:0007669"/>
    <property type="project" value="TreeGrafter"/>
</dbReference>
<dbReference type="GO" id="GO:0070778">
    <property type="term" value="P:L-aspartate transmembrane transport"/>
    <property type="evidence" value="ECO:0007669"/>
    <property type="project" value="TreeGrafter"/>
</dbReference>
<dbReference type="FunFam" id="1.10.3860.10:FF:000001">
    <property type="entry name" value="C4-dicarboxylate transport protein"/>
    <property type="match status" value="1"/>
</dbReference>
<dbReference type="Gene3D" id="1.10.3860.10">
    <property type="entry name" value="Sodium:dicarboxylate symporter"/>
    <property type="match status" value="1"/>
</dbReference>
<dbReference type="HAMAP" id="MF_01300">
    <property type="entry name" value="C4_dicarb_transport"/>
    <property type="match status" value="1"/>
</dbReference>
<dbReference type="InterPro" id="IPR023954">
    <property type="entry name" value="C4_dicarb_transport"/>
</dbReference>
<dbReference type="InterPro" id="IPR001991">
    <property type="entry name" value="Na-dicarboxylate_symporter"/>
</dbReference>
<dbReference type="InterPro" id="IPR018107">
    <property type="entry name" value="Na-dicarboxylate_symporter_CS"/>
</dbReference>
<dbReference type="InterPro" id="IPR036458">
    <property type="entry name" value="Na:dicarbo_symporter_sf"/>
</dbReference>
<dbReference type="NCBIfam" id="NF002461">
    <property type="entry name" value="PRK01663.1"/>
    <property type="match status" value="1"/>
</dbReference>
<dbReference type="NCBIfam" id="NF009587">
    <property type="entry name" value="PRK13027.1"/>
    <property type="match status" value="1"/>
</dbReference>
<dbReference type="PANTHER" id="PTHR42865:SF1">
    <property type="entry name" value="AEROBIC C4-DICARBOXYLATE TRANSPORT PROTEIN"/>
    <property type="match status" value="1"/>
</dbReference>
<dbReference type="PANTHER" id="PTHR42865">
    <property type="entry name" value="PROTON/GLUTAMATE-ASPARTATE SYMPORTER"/>
    <property type="match status" value="1"/>
</dbReference>
<dbReference type="Pfam" id="PF00375">
    <property type="entry name" value="SDF"/>
    <property type="match status" value="1"/>
</dbReference>
<dbReference type="PRINTS" id="PR00173">
    <property type="entry name" value="EDTRNSPORT"/>
</dbReference>
<dbReference type="SUPFAM" id="SSF118215">
    <property type="entry name" value="Proton glutamate symport protein"/>
    <property type="match status" value="1"/>
</dbReference>
<dbReference type="PROSITE" id="PS00713">
    <property type="entry name" value="NA_DICARBOXYL_SYMP_1"/>
    <property type="match status" value="1"/>
</dbReference>
<dbReference type="PROSITE" id="PS00714">
    <property type="entry name" value="NA_DICARBOXYL_SYMP_2"/>
    <property type="match status" value="1"/>
</dbReference>
<gene>
    <name evidence="1" type="primary">dctA</name>
    <name type="ordered locus">XCV3599</name>
</gene>
<comment type="function">
    <text evidence="1">Responsible for the transport of dicarboxylates such as succinate, fumarate, and malate from the periplasm across the membrane.</text>
</comment>
<comment type="subcellular location">
    <subcellularLocation>
        <location evidence="1">Cell inner membrane</location>
        <topology evidence="1">Multi-pass membrane protein</topology>
    </subcellularLocation>
</comment>
<comment type="similarity">
    <text evidence="1">Belongs to the dicarboxylate/amino acid:cation symporter (DAACS) (TC 2.A.23) family.</text>
</comment>
<keyword id="KW-0997">Cell inner membrane</keyword>
<keyword id="KW-1003">Cell membrane</keyword>
<keyword id="KW-0472">Membrane</keyword>
<keyword id="KW-0769">Symport</keyword>
<keyword id="KW-0812">Transmembrane</keyword>
<keyword id="KW-1133">Transmembrane helix</keyword>
<keyword id="KW-0813">Transport</keyword>
<proteinExistence type="inferred from homology"/>
<organism>
    <name type="scientific">Xanthomonas euvesicatoria pv. vesicatoria (strain 85-10)</name>
    <name type="common">Xanthomonas campestris pv. vesicatoria</name>
    <dbReference type="NCBI Taxonomy" id="316273"/>
    <lineage>
        <taxon>Bacteria</taxon>
        <taxon>Pseudomonadati</taxon>
        <taxon>Pseudomonadota</taxon>
        <taxon>Gammaproteobacteria</taxon>
        <taxon>Lysobacterales</taxon>
        <taxon>Lysobacteraceae</taxon>
        <taxon>Xanthomonas</taxon>
    </lineage>
</organism>
<reference key="1">
    <citation type="journal article" date="2005" name="J. Bacteriol.">
        <title>Insights into genome plasticity and pathogenicity of the plant pathogenic Bacterium Xanthomonas campestris pv. vesicatoria revealed by the complete genome sequence.</title>
        <authorList>
            <person name="Thieme F."/>
            <person name="Koebnik R."/>
            <person name="Bekel T."/>
            <person name="Berger C."/>
            <person name="Boch J."/>
            <person name="Buettner D."/>
            <person name="Caldana C."/>
            <person name="Gaigalat L."/>
            <person name="Goesmann A."/>
            <person name="Kay S."/>
            <person name="Kirchner O."/>
            <person name="Lanz C."/>
            <person name="Linke B."/>
            <person name="McHardy A.C."/>
            <person name="Meyer F."/>
            <person name="Mittenhuber G."/>
            <person name="Nies D.H."/>
            <person name="Niesbach-Kloesgen U."/>
            <person name="Patschkowski T."/>
            <person name="Rueckert C."/>
            <person name="Rupp O."/>
            <person name="Schneiker S."/>
            <person name="Schuster S.C."/>
            <person name="Vorhoelter F.J."/>
            <person name="Weber E."/>
            <person name="Puehler A."/>
            <person name="Bonas U."/>
            <person name="Bartels D."/>
            <person name="Kaiser O."/>
        </authorList>
    </citation>
    <scope>NUCLEOTIDE SEQUENCE [LARGE SCALE GENOMIC DNA]</scope>
    <source>
        <strain>85-10</strain>
    </source>
</reference>
<feature type="chain" id="PRO_1000067470" description="C4-dicarboxylate transport protein">
    <location>
        <begin position="1"/>
        <end position="457"/>
    </location>
</feature>
<feature type="transmembrane region" description="Helical" evidence="1">
    <location>
        <begin position="22"/>
        <end position="42"/>
    </location>
</feature>
<feature type="transmembrane region" description="Helical" evidence="1">
    <location>
        <begin position="55"/>
        <end position="75"/>
    </location>
</feature>
<feature type="transmembrane region" description="Helical" evidence="1">
    <location>
        <begin position="90"/>
        <end position="110"/>
    </location>
</feature>
<feature type="transmembrane region" description="Helical" evidence="1">
    <location>
        <begin position="138"/>
        <end position="158"/>
    </location>
</feature>
<feature type="transmembrane region" description="Helical" evidence="1">
    <location>
        <begin position="168"/>
        <end position="188"/>
    </location>
</feature>
<feature type="transmembrane region" description="Helical" evidence="1">
    <location>
        <begin position="209"/>
        <end position="229"/>
    </location>
</feature>
<feature type="transmembrane region" description="Helical" evidence="1">
    <location>
        <begin position="242"/>
        <end position="262"/>
    </location>
</feature>
<protein>
    <recommendedName>
        <fullName evidence="1">C4-dicarboxylate transport protein</fullName>
    </recommendedName>
</protein>
<name>DCTA_XANE5</name>
<evidence type="ECO:0000255" key="1">
    <source>
        <dbReference type="HAMAP-Rule" id="MF_01300"/>
    </source>
</evidence>
<sequence>MHISKPAGPLPASVPFYRQLYFQVVVAIVLGALLGHFEPAFAESLKPLGDAFIKLVKMIIAPVIFLTIVTGIAGMTHLKTVGRVFGKAMAYFLFFSTLALVVGLVVAHVVQPGAGMNINPADLDQSAVKSYVEKSHDLTLVGFLMDIIPNSLIGAFTGDQVVNGKLTGPNILQVLFVAVLFGVSLALVGERGKPVLNLLEALIAPVFKLVHILMRAAPIGAFGAIAFTIGKYGVESLVNLAWLVGSFYLTSLLFVLVILGLVSRLCGFSVLKLIRYLKAELLLVLGTSSSESALPSLMEKMEKAGCEKSVVGLVVPTGYSFNLDGTNIYMTLAALFIAQATNTELTLGHQIALLAVAMLSSKGAAGVTGAGFITLAATLAVVPEVPVAGMALILGVDRFMSECRSLTNFIGNAVATVVVSRWENALDRDRLKLVLDGGEPPLLAPVGQPGVAPASLR</sequence>